<accession>A5VSU2</accession>
<comment type="function">
    <text evidence="1">Catalyzes the ATP-dependent conversion of 7-carboxy-7-deazaguanine (CDG) to 7-cyano-7-deazaguanine (preQ(0)).</text>
</comment>
<comment type="catalytic activity">
    <reaction evidence="1">
        <text>7-carboxy-7-deazaguanine + NH4(+) + ATP = 7-cyano-7-deazaguanine + ADP + phosphate + H2O + H(+)</text>
        <dbReference type="Rhea" id="RHEA:27982"/>
        <dbReference type="ChEBI" id="CHEBI:15377"/>
        <dbReference type="ChEBI" id="CHEBI:15378"/>
        <dbReference type="ChEBI" id="CHEBI:28938"/>
        <dbReference type="ChEBI" id="CHEBI:30616"/>
        <dbReference type="ChEBI" id="CHEBI:43474"/>
        <dbReference type="ChEBI" id="CHEBI:45075"/>
        <dbReference type="ChEBI" id="CHEBI:61036"/>
        <dbReference type="ChEBI" id="CHEBI:456216"/>
        <dbReference type="EC" id="6.3.4.20"/>
    </reaction>
</comment>
<comment type="cofactor">
    <cofactor evidence="1">
        <name>Zn(2+)</name>
        <dbReference type="ChEBI" id="CHEBI:29105"/>
    </cofactor>
    <text evidence="1">Binds 1 zinc ion per subunit.</text>
</comment>
<comment type="pathway">
    <text evidence="1">Purine metabolism; 7-cyano-7-deazaguanine biosynthesis.</text>
</comment>
<comment type="similarity">
    <text evidence="1">Belongs to the QueC family.</text>
</comment>
<organism>
    <name type="scientific">Brucella ovis (strain ATCC 25840 / 63/290 / NCTC 10512)</name>
    <dbReference type="NCBI Taxonomy" id="444178"/>
    <lineage>
        <taxon>Bacteria</taxon>
        <taxon>Pseudomonadati</taxon>
        <taxon>Pseudomonadota</taxon>
        <taxon>Alphaproteobacteria</taxon>
        <taxon>Hyphomicrobiales</taxon>
        <taxon>Brucellaceae</taxon>
        <taxon>Brucella/Ochrobactrum group</taxon>
        <taxon>Brucella</taxon>
    </lineage>
</organism>
<protein>
    <recommendedName>
        <fullName evidence="1">7-cyano-7-deazaguanine synthase</fullName>
        <ecNumber evidence="1">6.3.4.20</ecNumber>
    </recommendedName>
    <alternativeName>
        <fullName evidence="1">7-cyano-7-carbaguanine synthase</fullName>
    </alternativeName>
    <alternativeName>
        <fullName evidence="1">PreQ(0) synthase</fullName>
    </alternativeName>
    <alternativeName>
        <fullName evidence="1">Queuosine biosynthesis protein QueC</fullName>
    </alternativeName>
</protein>
<feature type="chain" id="PRO_1000069751" description="7-cyano-7-deazaguanine synthase">
    <location>
        <begin position="1"/>
        <end position="232"/>
    </location>
</feature>
<feature type="binding site" evidence="1">
    <location>
        <begin position="7"/>
        <end position="17"/>
    </location>
    <ligand>
        <name>ATP</name>
        <dbReference type="ChEBI" id="CHEBI:30616"/>
    </ligand>
</feature>
<feature type="binding site" evidence="1">
    <location>
        <position position="185"/>
    </location>
    <ligand>
        <name>Zn(2+)</name>
        <dbReference type="ChEBI" id="CHEBI:29105"/>
    </ligand>
</feature>
<feature type="binding site" evidence="1">
    <location>
        <position position="193"/>
    </location>
    <ligand>
        <name>Zn(2+)</name>
        <dbReference type="ChEBI" id="CHEBI:29105"/>
    </ligand>
</feature>
<feature type="binding site" evidence="1">
    <location>
        <position position="196"/>
    </location>
    <ligand>
        <name>Zn(2+)</name>
        <dbReference type="ChEBI" id="CHEBI:29105"/>
    </ligand>
</feature>
<feature type="binding site" evidence="1">
    <location>
        <position position="199"/>
    </location>
    <ligand>
        <name>Zn(2+)</name>
        <dbReference type="ChEBI" id="CHEBI:29105"/>
    </ligand>
</feature>
<evidence type="ECO:0000255" key="1">
    <source>
        <dbReference type="HAMAP-Rule" id="MF_01633"/>
    </source>
</evidence>
<dbReference type="EC" id="6.3.4.20" evidence="1"/>
<dbReference type="EMBL" id="CP000708">
    <property type="protein sequence ID" value="ABQ60991.1"/>
    <property type="molecule type" value="Genomic_DNA"/>
</dbReference>
<dbReference type="RefSeq" id="WP_002965038.1">
    <property type="nucleotide sequence ID" value="NC_009505.1"/>
</dbReference>
<dbReference type="SMR" id="A5VSU2"/>
<dbReference type="GeneID" id="97534751"/>
<dbReference type="KEGG" id="bov:BOV_1897"/>
<dbReference type="HOGENOM" id="CLU_081854_1_0_5"/>
<dbReference type="PhylomeDB" id="A5VSU2"/>
<dbReference type="UniPathway" id="UPA00391"/>
<dbReference type="Proteomes" id="UP000006383">
    <property type="component" value="Chromosome I"/>
</dbReference>
<dbReference type="GO" id="GO:0005524">
    <property type="term" value="F:ATP binding"/>
    <property type="evidence" value="ECO:0007669"/>
    <property type="project" value="UniProtKB-UniRule"/>
</dbReference>
<dbReference type="GO" id="GO:0016879">
    <property type="term" value="F:ligase activity, forming carbon-nitrogen bonds"/>
    <property type="evidence" value="ECO:0007669"/>
    <property type="project" value="UniProtKB-UniRule"/>
</dbReference>
<dbReference type="GO" id="GO:0008270">
    <property type="term" value="F:zinc ion binding"/>
    <property type="evidence" value="ECO:0007669"/>
    <property type="project" value="UniProtKB-UniRule"/>
</dbReference>
<dbReference type="GO" id="GO:0008616">
    <property type="term" value="P:queuosine biosynthetic process"/>
    <property type="evidence" value="ECO:0007669"/>
    <property type="project" value="UniProtKB-UniRule"/>
</dbReference>
<dbReference type="CDD" id="cd01995">
    <property type="entry name" value="QueC-like"/>
    <property type="match status" value="1"/>
</dbReference>
<dbReference type="Gene3D" id="3.40.50.620">
    <property type="entry name" value="HUPs"/>
    <property type="match status" value="1"/>
</dbReference>
<dbReference type="HAMAP" id="MF_01633">
    <property type="entry name" value="QueC"/>
    <property type="match status" value="1"/>
</dbReference>
<dbReference type="InterPro" id="IPR018317">
    <property type="entry name" value="QueC"/>
</dbReference>
<dbReference type="InterPro" id="IPR014729">
    <property type="entry name" value="Rossmann-like_a/b/a_fold"/>
</dbReference>
<dbReference type="NCBIfam" id="TIGR00364">
    <property type="entry name" value="7-cyano-7-deazaguanine synthase QueC"/>
    <property type="match status" value="1"/>
</dbReference>
<dbReference type="PANTHER" id="PTHR42914">
    <property type="entry name" value="7-CYANO-7-DEAZAGUANINE SYNTHASE"/>
    <property type="match status" value="1"/>
</dbReference>
<dbReference type="PANTHER" id="PTHR42914:SF1">
    <property type="entry name" value="7-CYANO-7-DEAZAGUANINE SYNTHASE"/>
    <property type="match status" value="1"/>
</dbReference>
<dbReference type="Pfam" id="PF06508">
    <property type="entry name" value="QueC"/>
    <property type="match status" value="1"/>
</dbReference>
<dbReference type="PIRSF" id="PIRSF006293">
    <property type="entry name" value="ExsB"/>
    <property type="match status" value="1"/>
</dbReference>
<dbReference type="SUPFAM" id="SSF52402">
    <property type="entry name" value="Adenine nucleotide alpha hydrolases-like"/>
    <property type="match status" value="1"/>
</dbReference>
<sequence length="232" mass="25256">MKTLVICSGGLDSVSLAHKMAAEHELTGLLSFDYGQRHKKELDFAQACAKRLGVPHQIIDIRTIGASLTGSALTDDVDVPDGHYAEETMKVTVVPNRNAIMLAIAFGVAAAQKADAVALAVHGGDHFIYPDCRPGFIEAFQTMQKHALDGYADVKLLAPYVHATKADIVADGAKYRTPFEATWSCYKGADRHCGRCGTCVERREAFHLAGIDDPTSYEDADFWRATTQKRNA</sequence>
<gene>
    <name evidence="1" type="primary">queC</name>
    <name type="ordered locus">BOV_1897</name>
</gene>
<proteinExistence type="inferred from homology"/>
<keyword id="KW-0067">ATP-binding</keyword>
<keyword id="KW-0436">Ligase</keyword>
<keyword id="KW-0479">Metal-binding</keyword>
<keyword id="KW-0547">Nucleotide-binding</keyword>
<keyword id="KW-0671">Queuosine biosynthesis</keyword>
<keyword id="KW-0862">Zinc</keyword>
<reference key="1">
    <citation type="journal article" date="2009" name="PLoS ONE">
        <title>Genome degradation in Brucella ovis corresponds with narrowing of its host range and tissue tropism.</title>
        <authorList>
            <person name="Tsolis R.M."/>
            <person name="Seshadri R."/>
            <person name="Santos R.L."/>
            <person name="Sangari F.J."/>
            <person name="Lobo J.M."/>
            <person name="de Jong M.F."/>
            <person name="Ren Q."/>
            <person name="Myers G."/>
            <person name="Brinkac L.M."/>
            <person name="Nelson W.C."/>
            <person name="Deboy R.T."/>
            <person name="Angiuoli S."/>
            <person name="Khouri H."/>
            <person name="Dimitrov G."/>
            <person name="Robinson J.R."/>
            <person name="Mulligan S."/>
            <person name="Walker R.L."/>
            <person name="Elzer P.E."/>
            <person name="Hassan K.A."/>
            <person name="Paulsen I.T."/>
        </authorList>
    </citation>
    <scope>NUCLEOTIDE SEQUENCE [LARGE SCALE GENOMIC DNA]</scope>
    <source>
        <strain>ATCC 25840 / 63/290 / NCTC 10512</strain>
    </source>
</reference>
<name>QUEC_BRUO2</name>